<accession>Q82684</accession>
<sequence>MDHRDINTNMEALREALRYKNEVAGHGFSFDDGDLVWREEDDATWRRLCDVVNALISSKRMQRVLYMDLSITKGEGHLLLVDLQGTKNRLYKEPRFRRHLILIEDFLAYPR</sequence>
<comment type="function">
    <text>Plays an essential role for the viral pathogenicity.</text>
</comment>
<comment type="similarity">
    <text evidence="1">Belongs to the novirhabdovirus NV protein family.</text>
</comment>
<organismHost>
    <name type="scientific">Salmo</name>
    <dbReference type="NCBI Taxonomy" id="8028"/>
</organismHost>
<keyword id="KW-1185">Reference proteome</keyword>
<evidence type="ECO:0000305" key="1"/>
<organism>
    <name type="scientific">Infectious hematopoietic necrosis virus (strain WRAC)</name>
    <name type="common">IHNV</name>
    <dbReference type="NCBI Taxonomy" id="429314"/>
    <lineage>
        <taxon>Viruses</taxon>
        <taxon>Riboviria</taxon>
        <taxon>Orthornavirae</taxon>
        <taxon>Negarnaviricota</taxon>
        <taxon>Haploviricotina</taxon>
        <taxon>Monjiviricetes</taxon>
        <taxon>Mononegavirales</taxon>
        <taxon>Rhabdoviridae</taxon>
        <taxon>Gammarhabdovirinae</taxon>
        <taxon>Novirhabdovirus</taxon>
        <taxon>Novirhabdovirus salmonid</taxon>
    </lineage>
</organism>
<dbReference type="EMBL" id="L40883">
    <property type="protein sequence ID" value="AAC42154.1"/>
    <property type="molecule type" value="Genomic_RNA"/>
</dbReference>
<dbReference type="RefSeq" id="NP_042680.1">
    <property type="nucleotide sequence ID" value="NC_001652.1"/>
</dbReference>
<dbReference type="GeneID" id="1489849"/>
<dbReference type="KEGG" id="vg:1489849"/>
<dbReference type="Proteomes" id="UP000007212">
    <property type="component" value="Segment"/>
</dbReference>
<dbReference type="InterPro" id="IPR003490">
    <property type="entry name" value="Rhabd_NV"/>
</dbReference>
<dbReference type="Pfam" id="PF02484">
    <property type="entry name" value="Rhabdo_NV"/>
    <property type="match status" value="1"/>
</dbReference>
<reference key="1">
    <citation type="journal article" date="1995" name="Virus Res.">
        <title>The complete genome structure and phylogenetic relationship of infectious hematopoietic necrosis virus.</title>
        <authorList>
            <person name="Morzunov S.P."/>
            <person name="Winton J.R."/>
            <person name="Nichol S.T."/>
        </authorList>
    </citation>
    <scope>NUCLEOTIDE SEQUENCE [GENOMIC RNA]</scope>
</reference>
<feature type="chain" id="PRO_0000282905" description="Non-virion protein">
    <location>
        <begin position="1"/>
        <end position="111"/>
    </location>
</feature>
<gene>
    <name type="primary">NV</name>
</gene>
<protein>
    <recommendedName>
        <fullName>Non-virion protein</fullName>
    </recommendedName>
</protein>
<proteinExistence type="inferred from homology"/>
<name>NV_IHNVW</name>